<sequence>MVLMILPFVGPVSVSESLVAIITMCLVYMILKFFRTEIPEGLCQLPGPKPLPIIGNVLEVGRNPYLSLTAMSKRYGDVFQIQIGMRPVVVLSGSETVRQALIKQGDDFAGRPDLYSFRFINDGKSLAFSTDQAGVWRARRKLAYSALRSFSTLEGTTPEYSCALEEHVSKEAEYLVKQLNTVMETDGSFDPFRHIVVSVANVICGMCFGRRYDHNNQELLNLVNLSDEFGQVVASGNPADFIPILQYLPSTSMKKFVSINDRFNAFVQKIVSEHYTTFDKDNIRDITDSLIDHCEDRKLDENSNVQMSDEKVVGIVNDLFGAGFDTISTALSWSVMYLVAYPEIQERLYQEMKESVGLDRTPCLSDKPKLPFLEAFILEIFRHSSFLPFTIPHCSSKDTSLNGYFIPKDTCVFINQWQINHDPELWKDPSSFNPDRFLNTDGTELNKLEGEKMMVFGLGKRRCIGEVIARNEVFLFLAILVQNLRFHAKPGEPLDMTPEYGLTMKHKRCHLRAAMRSRNEE</sequence>
<proteinExistence type="evidence at transcript level"/>
<protein>
    <recommendedName>
        <fullName>Cytochrome P450 1A1</fullName>
        <ecNumber>1.14.14.1</ecNumber>
    </recommendedName>
    <alternativeName>
        <fullName>CYPIA1</fullName>
    </alternativeName>
</protein>
<dbReference type="EC" id="1.14.14.1"/>
<dbReference type="EMBL" id="AF011223">
    <property type="protein sequence ID" value="AAB64297.1"/>
    <property type="molecule type" value="mRNA"/>
</dbReference>
<dbReference type="EMBL" id="AF005719">
    <property type="protein sequence ID" value="AAB62887.1"/>
    <property type="molecule type" value="mRNA"/>
</dbReference>
<dbReference type="SMR" id="O42457"/>
<dbReference type="FunCoup" id="O42457">
    <property type="interactions" value="499"/>
</dbReference>
<dbReference type="Ensembl" id="ENSSAUT00010060013.1">
    <property type="protein sequence ID" value="ENSSAUP00010057154.1"/>
    <property type="gene ID" value="ENSSAUG00010023400.1"/>
</dbReference>
<dbReference type="GeneTree" id="ENSGT00950000183037"/>
<dbReference type="InParanoid" id="O42457"/>
<dbReference type="OMA" id="DPRAYWQ"/>
<dbReference type="OrthoDB" id="1055148at2759"/>
<dbReference type="Proteomes" id="UP000472265">
    <property type="component" value="Chromosome 4"/>
</dbReference>
<dbReference type="GO" id="GO:0005789">
    <property type="term" value="C:endoplasmic reticulum membrane"/>
    <property type="evidence" value="ECO:0007669"/>
    <property type="project" value="UniProtKB-SubCell"/>
</dbReference>
<dbReference type="GO" id="GO:0020037">
    <property type="term" value="F:heme binding"/>
    <property type="evidence" value="ECO:0007669"/>
    <property type="project" value="InterPro"/>
</dbReference>
<dbReference type="GO" id="GO:0005506">
    <property type="term" value="F:iron ion binding"/>
    <property type="evidence" value="ECO:0007669"/>
    <property type="project" value="InterPro"/>
</dbReference>
<dbReference type="GO" id="GO:0004508">
    <property type="term" value="F:steroid 17-alpha-monooxygenase activity"/>
    <property type="evidence" value="ECO:0007669"/>
    <property type="project" value="TreeGrafter"/>
</dbReference>
<dbReference type="GO" id="GO:0071466">
    <property type="term" value="P:cellular response to xenobiotic stimulus"/>
    <property type="evidence" value="ECO:0007669"/>
    <property type="project" value="Ensembl"/>
</dbReference>
<dbReference type="GO" id="GO:0042446">
    <property type="term" value="P:hormone biosynthetic process"/>
    <property type="evidence" value="ECO:0007669"/>
    <property type="project" value="TreeGrafter"/>
</dbReference>
<dbReference type="GO" id="GO:0042448">
    <property type="term" value="P:progesterone metabolic process"/>
    <property type="evidence" value="ECO:0007669"/>
    <property type="project" value="TreeGrafter"/>
</dbReference>
<dbReference type="CDD" id="cd20676">
    <property type="entry name" value="CYP1A"/>
    <property type="match status" value="1"/>
</dbReference>
<dbReference type="FunFam" id="1.10.630.10:FF:000002">
    <property type="entry name" value="Cytochrome P450 1A1"/>
    <property type="match status" value="1"/>
</dbReference>
<dbReference type="Gene3D" id="1.10.630.10">
    <property type="entry name" value="Cytochrome P450"/>
    <property type="match status" value="1"/>
</dbReference>
<dbReference type="InterPro" id="IPR001128">
    <property type="entry name" value="Cyt_P450"/>
</dbReference>
<dbReference type="InterPro" id="IPR017972">
    <property type="entry name" value="Cyt_P450_CS"/>
</dbReference>
<dbReference type="InterPro" id="IPR002401">
    <property type="entry name" value="Cyt_P450_E_grp-I"/>
</dbReference>
<dbReference type="InterPro" id="IPR008066">
    <property type="entry name" value="Cyt_P450_E_grp-I_CYP1"/>
</dbReference>
<dbReference type="InterPro" id="IPR036396">
    <property type="entry name" value="Cyt_P450_sf"/>
</dbReference>
<dbReference type="PANTHER" id="PTHR24289:SF21">
    <property type="entry name" value="CYTOCHROME P450 1A"/>
    <property type="match status" value="1"/>
</dbReference>
<dbReference type="PANTHER" id="PTHR24289">
    <property type="entry name" value="STEROID 17-ALPHA-HYDROXYLASE/17,20 LYASE"/>
    <property type="match status" value="1"/>
</dbReference>
<dbReference type="Pfam" id="PF00067">
    <property type="entry name" value="p450"/>
    <property type="match status" value="1"/>
</dbReference>
<dbReference type="PRINTS" id="PR00463">
    <property type="entry name" value="EP450I"/>
</dbReference>
<dbReference type="PRINTS" id="PR01683">
    <property type="entry name" value="EP450ICYP1A"/>
</dbReference>
<dbReference type="PRINTS" id="PR00385">
    <property type="entry name" value="P450"/>
</dbReference>
<dbReference type="SUPFAM" id="SSF48264">
    <property type="entry name" value="Cytochrome P450"/>
    <property type="match status" value="1"/>
</dbReference>
<dbReference type="PROSITE" id="PS00086">
    <property type="entry name" value="CYTOCHROME_P450"/>
    <property type="match status" value="1"/>
</dbReference>
<keyword id="KW-0256">Endoplasmic reticulum</keyword>
<keyword id="KW-0349">Heme</keyword>
<keyword id="KW-0408">Iron</keyword>
<keyword id="KW-0472">Membrane</keyword>
<keyword id="KW-0479">Metal-binding</keyword>
<keyword id="KW-0492">Microsome</keyword>
<keyword id="KW-0503">Monooxygenase</keyword>
<keyword id="KW-0560">Oxidoreductase</keyword>
<keyword id="KW-1185">Reference proteome</keyword>
<gene>
    <name type="primary">cyp1a1</name>
</gene>
<evidence type="ECO:0000250" key="1"/>
<evidence type="ECO:0000305" key="2"/>
<reference key="1">
    <citation type="submission" date="1997-06" db="EMBL/GenBank/DDBJ databases">
        <authorList>
            <person name="Cousinou M."/>
            <person name="Lopez-Barea J."/>
            <person name="Dorado G."/>
        </authorList>
    </citation>
    <scope>NUCLEOTIDE SEQUENCE [MRNA]</scope>
    <source>
        <tissue>Liver</tissue>
    </source>
</reference>
<reference key="2">
    <citation type="submission" date="1997-05" db="EMBL/GenBank/DDBJ databases">
        <authorList>
            <person name="Tom M."/>
        </authorList>
    </citation>
    <scope>NUCLEOTIDE SEQUENCE [MRNA] OF 175-521</scope>
    <source>
        <tissue>Liver</tissue>
    </source>
</reference>
<accession>O42457</accession>
<accession>O42458</accession>
<organism>
    <name type="scientific">Sparus aurata</name>
    <name type="common">Gilthead sea bream</name>
    <dbReference type="NCBI Taxonomy" id="8175"/>
    <lineage>
        <taxon>Eukaryota</taxon>
        <taxon>Metazoa</taxon>
        <taxon>Chordata</taxon>
        <taxon>Craniata</taxon>
        <taxon>Vertebrata</taxon>
        <taxon>Euteleostomi</taxon>
        <taxon>Actinopterygii</taxon>
        <taxon>Neopterygii</taxon>
        <taxon>Teleostei</taxon>
        <taxon>Neoteleostei</taxon>
        <taxon>Acanthomorphata</taxon>
        <taxon>Eupercaria</taxon>
        <taxon>Spariformes</taxon>
        <taxon>Sparidae</taxon>
        <taxon>Sparus</taxon>
    </lineage>
</organism>
<name>CP1A1_SPAAU</name>
<feature type="chain" id="PRO_0000051647" description="Cytochrome P450 1A1">
    <location>
        <begin position="1"/>
        <end position="521"/>
    </location>
</feature>
<feature type="binding site" evidence="1">
    <location>
        <position position="229"/>
    </location>
    <ligand>
        <name>substrate</name>
    </ligand>
</feature>
<feature type="binding site" description="axial binding residue" evidence="1">
    <location>
        <position position="463"/>
    </location>
    <ligand>
        <name>heme</name>
        <dbReference type="ChEBI" id="CHEBI:30413"/>
    </ligand>
    <ligandPart>
        <name>Fe</name>
        <dbReference type="ChEBI" id="CHEBI:18248"/>
    </ligandPart>
</feature>
<feature type="sequence conflict" description="In Ref. 2; AAB62887." evidence="2" ref="2">
    <original>LVK</original>
    <variation>GTR</variation>
    <location>
        <begin position="175"/>
        <end position="177"/>
    </location>
</feature>
<feature type="sequence conflict" description="In Ref. 2; AAB62887." evidence="2" ref="2">
    <original>G</original>
    <variation>A</variation>
    <location>
        <position position="209"/>
    </location>
</feature>
<feature type="sequence conflict" description="In Ref. 2; AAB62887." evidence="2" ref="2">
    <original>Y</original>
    <variation>S</variation>
    <location>
        <position position="212"/>
    </location>
</feature>
<comment type="function">
    <text>Cytochromes P450 are a group of heme-thiolate monooxygenases. They oxidize a variety of structurally unrelated compounds, including steroids, fatty acids, and xenobiotics.</text>
</comment>
<comment type="catalytic activity">
    <reaction>
        <text>an organic molecule + reduced [NADPH--hemoprotein reductase] + O2 = an alcohol + oxidized [NADPH--hemoprotein reductase] + H2O + H(+)</text>
        <dbReference type="Rhea" id="RHEA:17149"/>
        <dbReference type="Rhea" id="RHEA-COMP:11964"/>
        <dbReference type="Rhea" id="RHEA-COMP:11965"/>
        <dbReference type="ChEBI" id="CHEBI:15377"/>
        <dbReference type="ChEBI" id="CHEBI:15378"/>
        <dbReference type="ChEBI" id="CHEBI:15379"/>
        <dbReference type="ChEBI" id="CHEBI:30879"/>
        <dbReference type="ChEBI" id="CHEBI:57618"/>
        <dbReference type="ChEBI" id="CHEBI:58210"/>
        <dbReference type="ChEBI" id="CHEBI:142491"/>
        <dbReference type="EC" id="1.14.14.1"/>
    </reaction>
</comment>
<comment type="cofactor">
    <cofactor evidence="1">
        <name>heme</name>
        <dbReference type="ChEBI" id="CHEBI:30413"/>
    </cofactor>
</comment>
<comment type="subcellular location">
    <subcellularLocation>
        <location>Endoplasmic reticulum membrane</location>
        <topology>Peripheral membrane protein</topology>
    </subcellularLocation>
    <subcellularLocation>
        <location>Microsome membrane</location>
        <topology>Peripheral membrane protein</topology>
    </subcellularLocation>
</comment>
<comment type="similarity">
    <text evidence="2">Belongs to the cytochrome P450 family.</text>
</comment>